<reference key="1">
    <citation type="journal article" date="1997" name="Nature">
        <title>The nucleotide sequence of Saccharomyces cerevisiae chromosome IX.</title>
        <authorList>
            <person name="Churcher C.M."/>
            <person name="Bowman S."/>
            <person name="Badcock K."/>
            <person name="Bankier A.T."/>
            <person name="Brown D."/>
            <person name="Chillingworth T."/>
            <person name="Connor R."/>
            <person name="Devlin K."/>
            <person name="Gentles S."/>
            <person name="Hamlin N."/>
            <person name="Harris D.E."/>
            <person name="Horsnell T."/>
            <person name="Hunt S."/>
            <person name="Jagels K."/>
            <person name="Jones M."/>
            <person name="Lye G."/>
            <person name="Moule S."/>
            <person name="Odell C."/>
            <person name="Pearson D."/>
            <person name="Rajandream M.A."/>
            <person name="Rice P."/>
            <person name="Rowley N."/>
            <person name="Skelton J."/>
            <person name="Smith V."/>
            <person name="Walsh S.V."/>
            <person name="Whitehead S."/>
            <person name="Barrell B.G."/>
        </authorList>
    </citation>
    <scope>NUCLEOTIDE SEQUENCE [LARGE SCALE GENOMIC DNA]</scope>
    <source>
        <strain>ATCC 204508 / S288c</strain>
    </source>
</reference>
<reference key="2">
    <citation type="journal article" date="2014" name="G3 (Bethesda)">
        <title>The reference genome sequence of Saccharomyces cerevisiae: Then and now.</title>
        <authorList>
            <person name="Engel S.R."/>
            <person name="Dietrich F.S."/>
            <person name="Fisk D.G."/>
            <person name="Binkley G."/>
            <person name="Balakrishnan R."/>
            <person name="Costanzo M.C."/>
            <person name="Dwight S.S."/>
            <person name="Hitz B.C."/>
            <person name="Karra K."/>
            <person name="Nash R.S."/>
            <person name="Weng S."/>
            <person name="Wong E.D."/>
            <person name="Lloyd P."/>
            <person name="Skrzypek M.S."/>
            <person name="Miyasato S.R."/>
            <person name="Simison M."/>
            <person name="Cherry J.M."/>
        </authorList>
    </citation>
    <scope>GENOME REANNOTATION</scope>
    <source>
        <strain>ATCC 204508 / S288c</strain>
    </source>
</reference>
<reference key="3">
    <citation type="journal article" date="2007" name="Genome Res.">
        <title>Approaching a complete repository of sequence-verified protein-encoding clones for Saccharomyces cerevisiae.</title>
        <authorList>
            <person name="Hu Y."/>
            <person name="Rolfs A."/>
            <person name="Bhullar B."/>
            <person name="Murthy T.V.S."/>
            <person name="Zhu C."/>
            <person name="Berger M.F."/>
            <person name="Camargo A.A."/>
            <person name="Kelley F."/>
            <person name="McCarron S."/>
            <person name="Jepson D."/>
            <person name="Richardson A."/>
            <person name="Raphael J."/>
            <person name="Moreira D."/>
            <person name="Taycher E."/>
            <person name="Zuo D."/>
            <person name="Mohr S."/>
            <person name="Kane M.F."/>
            <person name="Williamson J."/>
            <person name="Simpson A.J.G."/>
            <person name="Bulyk M.L."/>
            <person name="Harlow E."/>
            <person name="Marsischky G."/>
            <person name="Kolodner R.D."/>
            <person name="LaBaer J."/>
        </authorList>
    </citation>
    <scope>NUCLEOTIDE SEQUENCE [GENOMIC DNA]</scope>
    <source>
        <strain>ATCC 204508 / S288c</strain>
    </source>
</reference>
<reference key="4">
    <citation type="journal article" date="1998" name="Genes Dev.">
        <title>Purification and characterization of the nuclear RNase P holoenzyme complex reveals extensive subunit overlap with RNase MRP.</title>
        <authorList>
            <person name="Chamberlain J.R."/>
            <person name="Lee Y."/>
            <person name="Lane W.S."/>
            <person name="Engelke D.R."/>
        </authorList>
    </citation>
    <scope>FUNCTION</scope>
    <scope>IDENTIFICATION IN THE RNASE P COMPLEX BY MASS SPECTROMETRY</scope>
</reference>
<reference key="5">
    <citation type="journal article" date="2003" name="Nature">
        <title>Global analysis of protein localization in budding yeast.</title>
        <authorList>
            <person name="Huh W.-K."/>
            <person name="Falvo J.V."/>
            <person name="Gerke L.C."/>
            <person name="Carroll A.S."/>
            <person name="Howson R.W."/>
            <person name="Weissman J.S."/>
            <person name="O'Shea E.K."/>
        </authorList>
    </citation>
    <scope>SUBCELLULAR LOCATION [LARGE SCALE ANALYSIS]</scope>
</reference>
<reference key="6">
    <citation type="journal article" date="2003" name="Nature">
        <title>Global analysis of protein expression in yeast.</title>
        <authorList>
            <person name="Ghaemmaghami S."/>
            <person name="Huh W.-K."/>
            <person name="Bower K."/>
            <person name="Howson R.W."/>
            <person name="Belle A."/>
            <person name="Dephoure N."/>
            <person name="O'Shea E.K."/>
            <person name="Weissman J.S."/>
        </authorList>
    </citation>
    <scope>LEVEL OF PROTEIN EXPRESSION [LARGE SCALE ANALYSIS]</scope>
</reference>
<sequence length="144" mass="16344">MGKKAHGGKMKPEIDENGTLLVPPPRTIANQDHFHRLNYLYQISAYQTRARQKARTDAHTPLARNYIKSMDLISKKTKTSLLPTIKRTICKKCHRLLWTPKKLEITSDGALSVMCGCGTVKRFNIGADPNYRTYSEREGNLLNS</sequence>
<name>RPR2_YEAST</name>
<evidence type="ECO:0000250" key="1"/>
<evidence type="ECO:0000256" key="2">
    <source>
        <dbReference type="SAM" id="MobiDB-lite"/>
    </source>
</evidence>
<evidence type="ECO:0000269" key="3">
    <source>
    </source>
</evidence>
<evidence type="ECO:0000269" key="4">
    <source>
    </source>
</evidence>
<evidence type="ECO:0000269" key="5">
    <source>
    </source>
</evidence>
<evidence type="ECO:0000305" key="6"/>
<evidence type="ECO:0007829" key="7">
    <source>
        <dbReference type="PDB" id="6AGB"/>
    </source>
</evidence>
<dbReference type="EC" id="3.1.26.5"/>
<dbReference type="EMBL" id="Z37996">
    <property type="protein sequence ID" value="CAA86085.1"/>
    <property type="molecule type" value="Genomic_DNA"/>
</dbReference>
<dbReference type="EMBL" id="AY557849">
    <property type="protein sequence ID" value="AAS56175.1"/>
    <property type="molecule type" value="Genomic_DNA"/>
</dbReference>
<dbReference type="EMBL" id="BK006942">
    <property type="protein sequence ID" value="DAA08561.1"/>
    <property type="molecule type" value="Genomic_DNA"/>
</dbReference>
<dbReference type="PIR" id="S48359">
    <property type="entry name" value="S48359"/>
</dbReference>
<dbReference type="RefSeq" id="NP_012280.1">
    <property type="nucleotide sequence ID" value="NM_001179537.1"/>
</dbReference>
<dbReference type="PDB" id="6AGB">
    <property type="method" value="EM"/>
    <property type="resolution" value="3.48 A"/>
    <property type="chains" value="K=1-144"/>
</dbReference>
<dbReference type="PDB" id="6AH3">
    <property type="method" value="EM"/>
    <property type="resolution" value="3.48 A"/>
    <property type="chains" value="K=1-144"/>
</dbReference>
<dbReference type="PDBsum" id="6AGB"/>
<dbReference type="PDBsum" id="6AH3"/>
<dbReference type="EMDB" id="EMD-9616"/>
<dbReference type="EMDB" id="EMD-9622"/>
<dbReference type="SMR" id="P40571"/>
<dbReference type="BioGRID" id="35007">
    <property type="interactions" value="20"/>
</dbReference>
<dbReference type="ComplexPortal" id="CPX-1873">
    <property type="entry name" value="Nucleolar ribonuclease P complex"/>
</dbReference>
<dbReference type="FunCoup" id="P40571">
    <property type="interactions" value="42"/>
</dbReference>
<dbReference type="IntAct" id="P40571">
    <property type="interactions" value="11"/>
</dbReference>
<dbReference type="MINT" id="P40571"/>
<dbReference type="STRING" id="4932.YIR015W"/>
<dbReference type="PaxDb" id="4932-YIR015W"/>
<dbReference type="PeptideAtlas" id="P40571"/>
<dbReference type="EnsemblFungi" id="YIR015W_mRNA">
    <property type="protein sequence ID" value="YIR015W"/>
    <property type="gene ID" value="YIR015W"/>
</dbReference>
<dbReference type="GeneID" id="854832"/>
<dbReference type="KEGG" id="sce:YIR015W"/>
<dbReference type="AGR" id="SGD:S000001454"/>
<dbReference type="SGD" id="S000001454">
    <property type="gene designation" value="RPR2"/>
</dbReference>
<dbReference type="VEuPathDB" id="FungiDB:YIR015W"/>
<dbReference type="eggNOG" id="KOG4394">
    <property type="taxonomic scope" value="Eukaryota"/>
</dbReference>
<dbReference type="HOGENOM" id="CLU_079140_4_1_1"/>
<dbReference type="InParanoid" id="P40571"/>
<dbReference type="OMA" id="RTIANQD"/>
<dbReference type="OrthoDB" id="128536at2759"/>
<dbReference type="BioCyc" id="YEAST:YIR015W-MONOMER"/>
<dbReference type="BioGRID-ORCS" id="854832">
    <property type="hits" value="10 hits in 10 CRISPR screens"/>
</dbReference>
<dbReference type="PRO" id="PR:P40571"/>
<dbReference type="Proteomes" id="UP000002311">
    <property type="component" value="Chromosome IX"/>
</dbReference>
<dbReference type="RNAct" id="P40571">
    <property type="molecule type" value="protein"/>
</dbReference>
<dbReference type="GO" id="GO:0005655">
    <property type="term" value="C:nucleolar ribonuclease P complex"/>
    <property type="evidence" value="ECO:0000314"/>
    <property type="project" value="SGD"/>
</dbReference>
<dbReference type="GO" id="GO:0046872">
    <property type="term" value="F:metal ion binding"/>
    <property type="evidence" value="ECO:0007669"/>
    <property type="project" value="UniProtKB-KW"/>
</dbReference>
<dbReference type="GO" id="GO:0004526">
    <property type="term" value="F:ribonuclease P activity"/>
    <property type="evidence" value="ECO:0007669"/>
    <property type="project" value="UniProtKB-EC"/>
</dbReference>
<dbReference type="GO" id="GO:0034965">
    <property type="term" value="P:intronic box C/D snoRNA processing"/>
    <property type="evidence" value="ECO:0000314"/>
    <property type="project" value="SGD"/>
</dbReference>
<dbReference type="GO" id="GO:0001682">
    <property type="term" value="P:tRNA 5'-leader removal"/>
    <property type="evidence" value="ECO:0000314"/>
    <property type="project" value="ComplexPortal"/>
</dbReference>
<dbReference type="GO" id="GO:0008033">
    <property type="term" value="P:tRNA processing"/>
    <property type="evidence" value="ECO:0000315"/>
    <property type="project" value="SGD"/>
</dbReference>
<dbReference type="InterPro" id="IPR007175">
    <property type="entry name" value="Rpr2/Snm1/Rpp21"/>
</dbReference>
<dbReference type="PANTHER" id="PTHR14742:SF0">
    <property type="entry name" value="RIBONUCLEASE P PROTEIN SUBUNIT P21"/>
    <property type="match status" value="1"/>
</dbReference>
<dbReference type="PANTHER" id="PTHR14742">
    <property type="entry name" value="RIBONUCLEASE P SUBUNIT P21"/>
    <property type="match status" value="1"/>
</dbReference>
<dbReference type="Pfam" id="PF04032">
    <property type="entry name" value="Rpr2"/>
    <property type="match status" value="1"/>
</dbReference>
<organism>
    <name type="scientific">Saccharomyces cerevisiae (strain ATCC 204508 / S288c)</name>
    <name type="common">Baker's yeast</name>
    <dbReference type="NCBI Taxonomy" id="559292"/>
    <lineage>
        <taxon>Eukaryota</taxon>
        <taxon>Fungi</taxon>
        <taxon>Dikarya</taxon>
        <taxon>Ascomycota</taxon>
        <taxon>Saccharomycotina</taxon>
        <taxon>Saccharomycetes</taxon>
        <taxon>Saccharomycetales</taxon>
        <taxon>Saccharomycetaceae</taxon>
        <taxon>Saccharomyces</taxon>
    </lineage>
</organism>
<protein>
    <recommendedName>
        <fullName>Ribonuclease P protein subunit RPR2</fullName>
        <ecNumber>3.1.26.5</ecNumber>
    </recommendedName>
    <alternativeName>
        <fullName>RNA-processing protein RPR2</fullName>
    </alternativeName>
    <alternativeName>
        <fullName>RNase P 16.4 kDa subunit</fullName>
    </alternativeName>
</protein>
<feature type="chain" id="PRO_0000153847" description="Ribonuclease P protein subunit RPR2">
    <location>
        <begin position="1"/>
        <end position="144"/>
    </location>
</feature>
<feature type="region of interest" description="Disordered" evidence="2">
    <location>
        <begin position="1"/>
        <end position="22"/>
    </location>
</feature>
<feature type="binding site" evidence="1">
    <location>
        <position position="90"/>
    </location>
    <ligand>
        <name>Zn(2+)</name>
        <dbReference type="ChEBI" id="CHEBI:29105"/>
    </ligand>
</feature>
<feature type="binding site" evidence="1">
    <location>
        <position position="93"/>
    </location>
    <ligand>
        <name>Zn(2+)</name>
        <dbReference type="ChEBI" id="CHEBI:29105"/>
    </ligand>
</feature>
<feature type="binding site" evidence="1">
    <location>
        <position position="115"/>
    </location>
    <ligand>
        <name>Zn(2+)</name>
        <dbReference type="ChEBI" id="CHEBI:29105"/>
    </ligand>
</feature>
<feature type="binding site" evidence="1">
    <location>
        <position position="117"/>
    </location>
    <ligand>
        <name>Zn(2+)</name>
        <dbReference type="ChEBI" id="CHEBI:29105"/>
    </ligand>
</feature>
<feature type="helix" evidence="7">
    <location>
        <begin position="28"/>
        <end position="54"/>
    </location>
</feature>
<feature type="helix" evidence="7">
    <location>
        <begin position="60"/>
        <end position="76"/>
    </location>
</feature>
<feature type="helix" evidence="7">
    <location>
        <begin position="83"/>
        <end position="88"/>
    </location>
</feature>
<feature type="strand" evidence="7">
    <location>
        <begin position="91"/>
        <end position="93"/>
    </location>
</feature>
<feature type="strand" evidence="7">
    <location>
        <begin position="101"/>
        <end position="105"/>
    </location>
</feature>
<feature type="strand" evidence="7">
    <location>
        <begin position="107"/>
        <end position="114"/>
    </location>
</feature>
<feature type="strand" evidence="7">
    <location>
        <begin position="116"/>
        <end position="118"/>
    </location>
</feature>
<feature type="strand" evidence="7">
    <location>
        <begin position="140"/>
        <end position="142"/>
    </location>
</feature>
<keyword id="KW-0002">3D-structure</keyword>
<keyword id="KW-0378">Hydrolase</keyword>
<keyword id="KW-0479">Metal-binding</keyword>
<keyword id="KW-0539">Nucleus</keyword>
<keyword id="KW-1185">Reference proteome</keyword>
<keyword id="KW-0819">tRNA processing</keyword>
<keyword id="KW-0862">Zinc</keyword>
<proteinExistence type="evidence at protein level"/>
<gene>
    <name type="primary">RPR2</name>
    <name type="ordered locus">YIR015W</name>
</gene>
<accession>P40571</accession>
<accession>D6VVU5</accession>
<comment type="function">
    <text evidence="5">Component of ribonuclease P, a protein complex that generates mature tRNA molecules by cleaving their 5'-ends.</text>
</comment>
<comment type="catalytic activity">
    <reaction>
        <text>Endonucleolytic cleavage of RNA, removing 5'-extranucleotides from tRNA precursor.</text>
        <dbReference type="EC" id="3.1.26.5"/>
    </reaction>
</comment>
<comment type="cofactor">
    <cofactor evidence="1">
        <name>Zn(2+)</name>
        <dbReference type="ChEBI" id="CHEBI:29105"/>
    </cofactor>
    <text evidence="1">Binds 1 zinc ion per subunit.</text>
</comment>
<comment type="subunit">
    <text evidence="5">Component of nuclear RNase P. RNase P consists of an RNA moiety and at least 9 protein subunits including POP1, POP3, POP4, POP5, POP6, POP7, POP8, RPP1 and RPR2, many of which are shared with the RNase MPR complex.</text>
</comment>
<comment type="interaction">
    <interactant intactId="EBI-25408">
        <id>P40571</id>
    </interactant>
    <interactant intactId="EBI-13646">
        <id>P38336</id>
        <label>POP4</label>
    </interactant>
    <organismsDiffer>false</organismsDiffer>
    <experiments>4</experiments>
</comment>
<comment type="interaction">
    <interactant intactId="EBI-25408">
        <id>P40571</id>
    </interactant>
    <interactant intactId="EBI-13662">
        <id>P53218</id>
        <label>POP6</label>
    </interactant>
    <organismsDiffer>false</organismsDiffer>
    <experiments>3</experiments>
</comment>
<comment type="subcellular location">
    <subcellularLocation>
        <location evidence="3">Nucleus</location>
    </subcellularLocation>
</comment>
<comment type="miscellaneous">
    <text evidence="4">Present with 2070 molecules/cell in log phase SD medium.</text>
</comment>
<comment type="similarity">
    <text evidence="6">Belongs to the eukaryotic/archaeal RNase P protein component 4 family.</text>
</comment>